<gene>
    <name evidence="1" type="primary">pcm</name>
    <name type="ordered locus">Pmob_1901</name>
</gene>
<name>PIMT_PETMO</name>
<proteinExistence type="inferred from homology"/>
<keyword id="KW-0963">Cytoplasm</keyword>
<keyword id="KW-0489">Methyltransferase</keyword>
<keyword id="KW-0949">S-adenosyl-L-methionine</keyword>
<keyword id="KW-0808">Transferase</keyword>
<accession>A9BH07</accession>
<dbReference type="EC" id="2.1.1.77" evidence="1"/>
<dbReference type="EMBL" id="CP000879">
    <property type="protein sequence ID" value="ABX32588.1"/>
    <property type="molecule type" value="Genomic_DNA"/>
</dbReference>
<dbReference type="RefSeq" id="WP_012209685.1">
    <property type="nucleotide sequence ID" value="NC_010003.1"/>
</dbReference>
<dbReference type="SMR" id="A9BH07"/>
<dbReference type="STRING" id="403833.Pmob_1901"/>
<dbReference type="KEGG" id="pmo:Pmob_1901"/>
<dbReference type="eggNOG" id="COG2518">
    <property type="taxonomic scope" value="Bacteria"/>
</dbReference>
<dbReference type="HOGENOM" id="CLU_055432_2_0_0"/>
<dbReference type="OrthoDB" id="9772751at2"/>
<dbReference type="Proteomes" id="UP000000789">
    <property type="component" value="Chromosome"/>
</dbReference>
<dbReference type="GO" id="GO:0005737">
    <property type="term" value="C:cytoplasm"/>
    <property type="evidence" value="ECO:0007669"/>
    <property type="project" value="UniProtKB-SubCell"/>
</dbReference>
<dbReference type="GO" id="GO:0004719">
    <property type="term" value="F:protein-L-isoaspartate (D-aspartate) O-methyltransferase activity"/>
    <property type="evidence" value="ECO:0007669"/>
    <property type="project" value="UniProtKB-UniRule"/>
</dbReference>
<dbReference type="GO" id="GO:0032259">
    <property type="term" value="P:methylation"/>
    <property type="evidence" value="ECO:0007669"/>
    <property type="project" value="UniProtKB-KW"/>
</dbReference>
<dbReference type="GO" id="GO:0036211">
    <property type="term" value="P:protein modification process"/>
    <property type="evidence" value="ECO:0007669"/>
    <property type="project" value="UniProtKB-UniRule"/>
</dbReference>
<dbReference type="GO" id="GO:0030091">
    <property type="term" value="P:protein repair"/>
    <property type="evidence" value="ECO:0007669"/>
    <property type="project" value="UniProtKB-UniRule"/>
</dbReference>
<dbReference type="CDD" id="cd02440">
    <property type="entry name" value="AdoMet_MTases"/>
    <property type="match status" value="1"/>
</dbReference>
<dbReference type="FunFam" id="3.40.50.150:FF:000010">
    <property type="entry name" value="Protein-L-isoaspartate O-methyltransferase"/>
    <property type="match status" value="1"/>
</dbReference>
<dbReference type="Gene3D" id="3.40.50.150">
    <property type="entry name" value="Vaccinia Virus protein VP39"/>
    <property type="match status" value="1"/>
</dbReference>
<dbReference type="HAMAP" id="MF_00090">
    <property type="entry name" value="PIMT"/>
    <property type="match status" value="1"/>
</dbReference>
<dbReference type="InterPro" id="IPR000682">
    <property type="entry name" value="PCMT"/>
</dbReference>
<dbReference type="InterPro" id="IPR029063">
    <property type="entry name" value="SAM-dependent_MTases_sf"/>
</dbReference>
<dbReference type="NCBIfam" id="TIGR00080">
    <property type="entry name" value="pimt"/>
    <property type="match status" value="1"/>
</dbReference>
<dbReference type="NCBIfam" id="NF001453">
    <property type="entry name" value="PRK00312.1"/>
    <property type="match status" value="1"/>
</dbReference>
<dbReference type="PANTHER" id="PTHR11579">
    <property type="entry name" value="PROTEIN-L-ISOASPARTATE O-METHYLTRANSFERASE"/>
    <property type="match status" value="1"/>
</dbReference>
<dbReference type="PANTHER" id="PTHR11579:SF0">
    <property type="entry name" value="PROTEIN-L-ISOASPARTATE(D-ASPARTATE) O-METHYLTRANSFERASE"/>
    <property type="match status" value="1"/>
</dbReference>
<dbReference type="Pfam" id="PF01135">
    <property type="entry name" value="PCMT"/>
    <property type="match status" value="1"/>
</dbReference>
<dbReference type="SUPFAM" id="SSF53335">
    <property type="entry name" value="S-adenosyl-L-methionine-dependent methyltransferases"/>
    <property type="match status" value="1"/>
</dbReference>
<protein>
    <recommendedName>
        <fullName evidence="1">Protein-L-isoaspartate O-methyltransferase</fullName>
        <ecNumber evidence="1">2.1.1.77</ecNumber>
    </recommendedName>
    <alternativeName>
        <fullName evidence="1">L-isoaspartyl protein carboxyl methyltransferase</fullName>
    </alternativeName>
    <alternativeName>
        <fullName evidence="1">Protein L-isoaspartyl methyltransferase</fullName>
    </alternativeName>
    <alternativeName>
        <fullName evidence="1">Protein-beta-aspartate methyltransferase</fullName>
        <shortName evidence="1">PIMT</shortName>
    </alternativeName>
</protein>
<sequence length="213" mass="24279">MDFEKESRMMVEYQLKRRGISDEKVLNAFLKVKRHLFVPKDLERYAYDDCPLPIGEGQTISQPYIIGLMLQLLELRENDVVLEIGTGSGYQTALLAEIVRLVYTIERNETLAQRAKNKFEELGYKNIVLEVGDGTKGWTKEEIEFDGIIVSAAAPKVPEPLFSQLKIGGRMVIPIGSRTFQRLHKITKLEDGNMKVEYSDGCMFVPLIGEYGW</sequence>
<reference key="1">
    <citation type="submission" date="2007-11" db="EMBL/GenBank/DDBJ databases">
        <title>Complete sequence of Petroga mobilis SJ95.</title>
        <authorList>
            <consortium name="US DOE Joint Genome Institute"/>
            <person name="Copeland A."/>
            <person name="Lucas S."/>
            <person name="Lapidus A."/>
            <person name="Barry K."/>
            <person name="Glavina del Rio T."/>
            <person name="Dalin E."/>
            <person name="Tice H."/>
            <person name="Pitluck S."/>
            <person name="Meincke L."/>
            <person name="Brettin T."/>
            <person name="Bruce D."/>
            <person name="Detter J.C."/>
            <person name="Han C."/>
            <person name="Kuske C.R."/>
            <person name="Schmutz J."/>
            <person name="Larimer F."/>
            <person name="Land M."/>
            <person name="Hauser L."/>
            <person name="Kyrpides N."/>
            <person name="Mikhailova N."/>
            <person name="Noll K."/>
            <person name="Richardson P."/>
        </authorList>
    </citation>
    <scope>NUCLEOTIDE SEQUENCE [LARGE SCALE GENOMIC DNA]</scope>
    <source>
        <strain>DSM 10674 / SJ95</strain>
    </source>
</reference>
<feature type="chain" id="PRO_0000351900" description="Protein-L-isoaspartate O-methyltransferase">
    <location>
        <begin position="1"/>
        <end position="213"/>
    </location>
</feature>
<feature type="active site" evidence="1">
    <location>
        <position position="61"/>
    </location>
</feature>
<comment type="function">
    <text evidence="1">Catalyzes the methyl esterification of L-isoaspartyl residues in peptides and proteins that result from spontaneous decomposition of normal L-aspartyl and L-asparaginyl residues. It plays a role in the repair and/or degradation of damaged proteins.</text>
</comment>
<comment type="catalytic activity">
    <reaction evidence="1">
        <text>[protein]-L-isoaspartate + S-adenosyl-L-methionine = [protein]-L-isoaspartate alpha-methyl ester + S-adenosyl-L-homocysteine</text>
        <dbReference type="Rhea" id="RHEA:12705"/>
        <dbReference type="Rhea" id="RHEA-COMP:12143"/>
        <dbReference type="Rhea" id="RHEA-COMP:12144"/>
        <dbReference type="ChEBI" id="CHEBI:57856"/>
        <dbReference type="ChEBI" id="CHEBI:59789"/>
        <dbReference type="ChEBI" id="CHEBI:90596"/>
        <dbReference type="ChEBI" id="CHEBI:90598"/>
        <dbReference type="EC" id="2.1.1.77"/>
    </reaction>
</comment>
<comment type="subcellular location">
    <subcellularLocation>
        <location evidence="1">Cytoplasm</location>
    </subcellularLocation>
</comment>
<comment type="similarity">
    <text evidence="1">Belongs to the methyltransferase superfamily. L-isoaspartyl/D-aspartyl protein methyltransferase family.</text>
</comment>
<organism>
    <name type="scientific">Petrotoga mobilis (strain DSM 10674 / SJ95)</name>
    <dbReference type="NCBI Taxonomy" id="403833"/>
    <lineage>
        <taxon>Bacteria</taxon>
        <taxon>Thermotogati</taxon>
        <taxon>Thermotogota</taxon>
        <taxon>Thermotogae</taxon>
        <taxon>Petrotogales</taxon>
        <taxon>Petrotogaceae</taxon>
        <taxon>Petrotoga</taxon>
    </lineage>
</organism>
<evidence type="ECO:0000255" key="1">
    <source>
        <dbReference type="HAMAP-Rule" id="MF_00090"/>
    </source>
</evidence>